<accession>C3P507</accession>
<dbReference type="EC" id="3.6.1.31" evidence="1"/>
<dbReference type="EMBL" id="CP001598">
    <property type="protein sequence ID" value="ACQ47561.1"/>
    <property type="molecule type" value="Genomic_DNA"/>
</dbReference>
<dbReference type="RefSeq" id="WP_000432051.1">
    <property type="nucleotide sequence ID" value="NC_012659.1"/>
</dbReference>
<dbReference type="SMR" id="C3P507"/>
<dbReference type="GeneID" id="45021411"/>
<dbReference type="KEGG" id="bai:BAA_1499"/>
<dbReference type="HOGENOM" id="CLU_123337_0_0_9"/>
<dbReference type="UniPathway" id="UPA00031">
    <property type="reaction ID" value="UER00007"/>
</dbReference>
<dbReference type="GO" id="GO:0005737">
    <property type="term" value="C:cytoplasm"/>
    <property type="evidence" value="ECO:0007669"/>
    <property type="project" value="UniProtKB-SubCell"/>
</dbReference>
<dbReference type="GO" id="GO:0005524">
    <property type="term" value="F:ATP binding"/>
    <property type="evidence" value="ECO:0007669"/>
    <property type="project" value="UniProtKB-KW"/>
</dbReference>
<dbReference type="GO" id="GO:0004636">
    <property type="term" value="F:phosphoribosyl-ATP diphosphatase activity"/>
    <property type="evidence" value="ECO:0007669"/>
    <property type="project" value="UniProtKB-UniRule"/>
</dbReference>
<dbReference type="GO" id="GO:0000105">
    <property type="term" value="P:L-histidine biosynthetic process"/>
    <property type="evidence" value="ECO:0007669"/>
    <property type="project" value="UniProtKB-UniRule"/>
</dbReference>
<dbReference type="CDD" id="cd11534">
    <property type="entry name" value="NTP-PPase_HisIE_like"/>
    <property type="match status" value="1"/>
</dbReference>
<dbReference type="Gene3D" id="1.10.287.1080">
    <property type="entry name" value="MazG-like"/>
    <property type="match status" value="1"/>
</dbReference>
<dbReference type="HAMAP" id="MF_01020">
    <property type="entry name" value="HisE"/>
    <property type="match status" value="1"/>
</dbReference>
<dbReference type="InterPro" id="IPR008179">
    <property type="entry name" value="HisE"/>
</dbReference>
<dbReference type="InterPro" id="IPR021130">
    <property type="entry name" value="PRib-ATP_PPHydrolase-like"/>
</dbReference>
<dbReference type="NCBIfam" id="TIGR03188">
    <property type="entry name" value="histidine_hisI"/>
    <property type="match status" value="1"/>
</dbReference>
<dbReference type="NCBIfam" id="NF001611">
    <property type="entry name" value="PRK00400.1-3"/>
    <property type="match status" value="1"/>
</dbReference>
<dbReference type="PANTHER" id="PTHR42945">
    <property type="entry name" value="HISTIDINE BIOSYNTHESIS BIFUNCTIONAL PROTEIN"/>
    <property type="match status" value="1"/>
</dbReference>
<dbReference type="PANTHER" id="PTHR42945:SF9">
    <property type="entry name" value="HISTIDINE BIOSYNTHESIS BIFUNCTIONAL PROTEIN HISIE"/>
    <property type="match status" value="1"/>
</dbReference>
<dbReference type="Pfam" id="PF01503">
    <property type="entry name" value="PRA-PH"/>
    <property type="match status" value="1"/>
</dbReference>
<dbReference type="SUPFAM" id="SSF101386">
    <property type="entry name" value="all-alpha NTP pyrophosphatases"/>
    <property type="match status" value="1"/>
</dbReference>
<feature type="chain" id="PRO_1000149043" description="Phosphoribosyl-ATP pyrophosphatase">
    <location>
        <begin position="1"/>
        <end position="107"/>
    </location>
</feature>
<protein>
    <recommendedName>
        <fullName evidence="1">Phosphoribosyl-ATP pyrophosphatase</fullName>
        <shortName evidence="1">PRA-PH</shortName>
        <ecNumber evidence="1">3.6.1.31</ecNumber>
    </recommendedName>
</protein>
<reference key="1">
    <citation type="submission" date="2009-04" db="EMBL/GenBank/DDBJ databases">
        <title>Genome sequence of Bacillus anthracis A0248.</title>
        <authorList>
            <person name="Dodson R.J."/>
            <person name="Munk A.C."/>
            <person name="Bruce D."/>
            <person name="Detter C."/>
            <person name="Tapia R."/>
            <person name="Sutton G."/>
            <person name="Sims D."/>
            <person name="Brettin T."/>
        </authorList>
    </citation>
    <scope>NUCLEOTIDE SEQUENCE [LARGE SCALE GENOMIC DNA]</scope>
    <source>
        <strain>A0248</strain>
    </source>
</reference>
<keyword id="KW-0028">Amino-acid biosynthesis</keyword>
<keyword id="KW-0067">ATP-binding</keyword>
<keyword id="KW-0963">Cytoplasm</keyword>
<keyword id="KW-0368">Histidine biosynthesis</keyword>
<keyword id="KW-0378">Hydrolase</keyword>
<keyword id="KW-0547">Nucleotide-binding</keyword>
<proteinExistence type="inferred from homology"/>
<evidence type="ECO:0000255" key="1">
    <source>
        <dbReference type="HAMAP-Rule" id="MF_01020"/>
    </source>
</evidence>
<comment type="catalytic activity">
    <reaction evidence="1">
        <text>1-(5-phospho-beta-D-ribosyl)-ATP + H2O = 1-(5-phospho-beta-D-ribosyl)-5'-AMP + diphosphate + H(+)</text>
        <dbReference type="Rhea" id="RHEA:22828"/>
        <dbReference type="ChEBI" id="CHEBI:15377"/>
        <dbReference type="ChEBI" id="CHEBI:15378"/>
        <dbReference type="ChEBI" id="CHEBI:33019"/>
        <dbReference type="ChEBI" id="CHEBI:59457"/>
        <dbReference type="ChEBI" id="CHEBI:73183"/>
        <dbReference type="EC" id="3.6.1.31"/>
    </reaction>
</comment>
<comment type="pathway">
    <text evidence="1">Amino-acid biosynthesis; L-histidine biosynthesis; L-histidine from 5-phospho-alpha-D-ribose 1-diphosphate: step 2/9.</text>
</comment>
<comment type="subcellular location">
    <subcellularLocation>
        <location evidence="1">Cytoplasm</location>
    </subcellularLocation>
</comment>
<comment type="similarity">
    <text evidence="1">Belongs to the PRA-PH family.</text>
</comment>
<sequence>MENTFKLLFETIEERKRNPLPESYTNYLFSKGEDKILKKIGEECTEVIIASKNNDKEELVKEMVDVLYHCFVLLAEKNIPLEDIMEEVTERNGKLSRVGDRREIDTL</sequence>
<organism>
    <name type="scientific">Bacillus anthracis (strain A0248)</name>
    <dbReference type="NCBI Taxonomy" id="592021"/>
    <lineage>
        <taxon>Bacteria</taxon>
        <taxon>Bacillati</taxon>
        <taxon>Bacillota</taxon>
        <taxon>Bacilli</taxon>
        <taxon>Bacillales</taxon>
        <taxon>Bacillaceae</taxon>
        <taxon>Bacillus</taxon>
        <taxon>Bacillus cereus group</taxon>
    </lineage>
</organism>
<name>HIS2_BACAA</name>
<gene>
    <name evidence="1" type="primary">hisE</name>
    <name type="ordered locus">BAA_1499</name>
</gene>